<sequence length="448" mass="48772">MKSYEVNFDGLVGPTHNYGGLSYGNVASQSNSQQSSNPKEAALQGLQKMKALMDMGFVQGVLAPQERPDVAALRNLGFSGTDAQVIQQAAKHAMPLLVASCSASSMWVANAATVSPSADTADGRVHFTAANLNCKYHRSIEHPTTSRVLGAMFADQKHFAHHAALPAVAQFGDEGAANHTRFCRDYGEAGVEFFVYGRSAFDTRYPAPQKYPARQTLEASQAVARLHGLQDDGVVYAQQNPAVIDAGVFHNDVIAVGNGEVLFYHEDAFLNTEQMLGELHGKLGKLGGHFQSVCVPRAQVSVEDAVRSYLFNSQLLSRADGSMLLIVPEECRANERVWQYLQGLTASGGLIREVKVFDLKQSMQNGGGPACLRLRVALNETELAAVNPGVIMTAPLYDTLTQWVDKHYRDSLRETDLADPQLLLECRTALDELTQILKLGSVYPFQIN</sequence>
<comment type="function">
    <text evidence="1">Catalyzes the hydrolysis of N(2)-succinylarginine into N(2)-succinylornithine, ammonia and CO(2).</text>
</comment>
<comment type="catalytic activity">
    <reaction evidence="1">
        <text>N(2)-succinyl-L-arginine + 2 H2O + 2 H(+) = N(2)-succinyl-L-ornithine + 2 NH4(+) + CO2</text>
        <dbReference type="Rhea" id="RHEA:19533"/>
        <dbReference type="ChEBI" id="CHEBI:15377"/>
        <dbReference type="ChEBI" id="CHEBI:15378"/>
        <dbReference type="ChEBI" id="CHEBI:16526"/>
        <dbReference type="ChEBI" id="CHEBI:28938"/>
        <dbReference type="ChEBI" id="CHEBI:58241"/>
        <dbReference type="ChEBI" id="CHEBI:58514"/>
        <dbReference type="EC" id="3.5.3.23"/>
    </reaction>
</comment>
<comment type="pathway">
    <text evidence="1">Amino-acid degradation; L-arginine degradation via AST pathway; L-glutamate and succinate from L-arginine: step 2/5.</text>
</comment>
<comment type="subunit">
    <text evidence="1">Homodimer.</text>
</comment>
<comment type="similarity">
    <text evidence="1">Belongs to the succinylarginine dihydrolase family.</text>
</comment>
<name>ASTB_PSEFS</name>
<dbReference type="EC" id="3.5.3.23" evidence="1"/>
<dbReference type="EMBL" id="AM181176">
    <property type="protein sequence ID" value="CAY51577.1"/>
    <property type="molecule type" value="Genomic_DNA"/>
</dbReference>
<dbReference type="RefSeq" id="WP_015885472.1">
    <property type="nucleotide sequence ID" value="NC_012660.1"/>
</dbReference>
<dbReference type="SMR" id="C3JXY6"/>
<dbReference type="STRING" id="294.SRM1_04228"/>
<dbReference type="GeneID" id="93466365"/>
<dbReference type="PATRIC" id="fig|216595.4.peg.4887"/>
<dbReference type="eggNOG" id="COG3724">
    <property type="taxonomic scope" value="Bacteria"/>
</dbReference>
<dbReference type="HOGENOM" id="CLU_053835_0_0_6"/>
<dbReference type="OrthoDB" id="248552at2"/>
<dbReference type="UniPathway" id="UPA00185">
    <property type="reaction ID" value="UER00280"/>
</dbReference>
<dbReference type="GO" id="GO:0009015">
    <property type="term" value="F:N-succinylarginine dihydrolase activity"/>
    <property type="evidence" value="ECO:0007669"/>
    <property type="project" value="UniProtKB-UniRule"/>
</dbReference>
<dbReference type="GO" id="GO:0019544">
    <property type="term" value="P:arginine catabolic process to glutamate"/>
    <property type="evidence" value="ECO:0007669"/>
    <property type="project" value="UniProtKB-UniRule"/>
</dbReference>
<dbReference type="GO" id="GO:0019545">
    <property type="term" value="P:arginine catabolic process to succinate"/>
    <property type="evidence" value="ECO:0007669"/>
    <property type="project" value="UniProtKB-UniRule"/>
</dbReference>
<dbReference type="FunFam" id="3.75.10.20:FF:000001">
    <property type="entry name" value="N-succinylarginine dihydrolase"/>
    <property type="match status" value="1"/>
</dbReference>
<dbReference type="Gene3D" id="3.75.10.20">
    <property type="entry name" value="Succinylarginine dihydrolase"/>
    <property type="match status" value="1"/>
</dbReference>
<dbReference type="HAMAP" id="MF_01172">
    <property type="entry name" value="AstB"/>
    <property type="match status" value="1"/>
</dbReference>
<dbReference type="InterPro" id="IPR037031">
    <property type="entry name" value="AstB_sf"/>
</dbReference>
<dbReference type="InterPro" id="IPR007079">
    <property type="entry name" value="SuccinylArg_d-Hdrlase_AstB"/>
</dbReference>
<dbReference type="NCBIfam" id="TIGR03241">
    <property type="entry name" value="arg_catab_astB"/>
    <property type="match status" value="1"/>
</dbReference>
<dbReference type="NCBIfam" id="NF009789">
    <property type="entry name" value="PRK13281.1"/>
    <property type="match status" value="1"/>
</dbReference>
<dbReference type="PANTHER" id="PTHR30420">
    <property type="entry name" value="N-SUCCINYLARGININE DIHYDROLASE"/>
    <property type="match status" value="1"/>
</dbReference>
<dbReference type="PANTHER" id="PTHR30420:SF2">
    <property type="entry name" value="N-SUCCINYLARGININE DIHYDROLASE"/>
    <property type="match status" value="1"/>
</dbReference>
<dbReference type="Pfam" id="PF04996">
    <property type="entry name" value="AstB"/>
    <property type="match status" value="1"/>
</dbReference>
<dbReference type="SUPFAM" id="SSF55909">
    <property type="entry name" value="Pentein"/>
    <property type="match status" value="1"/>
</dbReference>
<accession>C3JXY6</accession>
<keyword id="KW-0056">Arginine metabolism</keyword>
<keyword id="KW-0378">Hydrolase</keyword>
<proteinExistence type="inferred from homology"/>
<gene>
    <name evidence="1" type="primary">astB</name>
    <name type="ordered locus">PFLU_4753</name>
</gene>
<evidence type="ECO:0000255" key="1">
    <source>
        <dbReference type="HAMAP-Rule" id="MF_01172"/>
    </source>
</evidence>
<feature type="chain" id="PRO_1000213740" description="N-succinylarginine dihydrolase">
    <location>
        <begin position="1"/>
        <end position="448"/>
    </location>
</feature>
<feature type="active site" evidence="1">
    <location>
        <position position="174"/>
    </location>
</feature>
<feature type="active site" evidence="1">
    <location>
        <position position="250"/>
    </location>
</feature>
<feature type="active site" description="Nucleophile" evidence="1">
    <location>
        <position position="371"/>
    </location>
</feature>
<feature type="binding site" evidence="1">
    <location>
        <begin position="19"/>
        <end position="28"/>
    </location>
    <ligand>
        <name>substrate</name>
    </ligand>
</feature>
<feature type="binding site" evidence="1">
    <location>
        <position position="110"/>
    </location>
    <ligand>
        <name>substrate</name>
    </ligand>
</feature>
<feature type="binding site" evidence="1">
    <location>
        <begin position="137"/>
        <end position="138"/>
    </location>
    <ligand>
        <name>substrate</name>
    </ligand>
</feature>
<feature type="binding site" evidence="1">
    <location>
        <position position="214"/>
    </location>
    <ligand>
        <name>substrate</name>
    </ligand>
</feature>
<feature type="binding site" evidence="1">
    <location>
        <position position="252"/>
    </location>
    <ligand>
        <name>substrate</name>
    </ligand>
</feature>
<feature type="binding site" evidence="1">
    <location>
        <position position="365"/>
    </location>
    <ligand>
        <name>substrate</name>
    </ligand>
</feature>
<protein>
    <recommendedName>
        <fullName evidence="1">N-succinylarginine dihydrolase</fullName>
        <ecNumber evidence="1">3.5.3.23</ecNumber>
    </recommendedName>
</protein>
<reference key="1">
    <citation type="journal article" date="2009" name="Genome Biol.">
        <title>Genomic and genetic analyses of diversity and plant interactions of Pseudomonas fluorescens.</title>
        <authorList>
            <person name="Silby M.W."/>
            <person name="Cerdeno-Tarraga A.M."/>
            <person name="Vernikos G.S."/>
            <person name="Giddens S.R."/>
            <person name="Jackson R.W."/>
            <person name="Preston G.M."/>
            <person name="Zhang X.-X."/>
            <person name="Moon C.D."/>
            <person name="Gehrig S.M."/>
            <person name="Godfrey S.A.C."/>
            <person name="Knight C.G."/>
            <person name="Malone J.G."/>
            <person name="Robinson Z."/>
            <person name="Spiers A.J."/>
            <person name="Harris S."/>
            <person name="Challis G.L."/>
            <person name="Yaxley A.M."/>
            <person name="Harris D."/>
            <person name="Seeger K."/>
            <person name="Murphy L."/>
            <person name="Rutter S."/>
            <person name="Squares R."/>
            <person name="Quail M.A."/>
            <person name="Saunders E."/>
            <person name="Mavromatis K."/>
            <person name="Brettin T.S."/>
            <person name="Bentley S.D."/>
            <person name="Hothersall J."/>
            <person name="Stephens E."/>
            <person name="Thomas C.M."/>
            <person name="Parkhill J."/>
            <person name="Levy S.B."/>
            <person name="Rainey P.B."/>
            <person name="Thomson N.R."/>
        </authorList>
    </citation>
    <scope>NUCLEOTIDE SEQUENCE [LARGE SCALE GENOMIC DNA]</scope>
    <source>
        <strain>SBW25</strain>
    </source>
</reference>
<organism>
    <name type="scientific">Pseudomonas fluorescens (strain SBW25)</name>
    <dbReference type="NCBI Taxonomy" id="216595"/>
    <lineage>
        <taxon>Bacteria</taxon>
        <taxon>Pseudomonadati</taxon>
        <taxon>Pseudomonadota</taxon>
        <taxon>Gammaproteobacteria</taxon>
        <taxon>Pseudomonadales</taxon>
        <taxon>Pseudomonadaceae</taxon>
        <taxon>Pseudomonas</taxon>
    </lineage>
</organism>